<organism>
    <name type="scientific">Trapa natans</name>
    <name type="common">Water chestnut</name>
    <dbReference type="NCBI Taxonomy" id="22666"/>
    <lineage>
        <taxon>Eukaryota</taxon>
        <taxon>Viridiplantae</taxon>
        <taxon>Streptophyta</taxon>
        <taxon>Embryophyta</taxon>
        <taxon>Tracheophyta</taxon>
        <taxon>Spermatophyta</taxon>
        <taxon>Magnoliopsida</taxon>
        <taxon>eudicotyledons</taxon>
        <taxon>Gunneridae</taxon>
        <taxon>Pentapetalae</taxon>
        <taxon>rosids</taxon>
        <taxon>malvids</taxon>
        <taxon>Myrtales</taxon>
        <taxon>Lythraceae</taxon>
        <taxon>Trapa</taxon>
    </lineage>
</organism>
<sequence>LMCTHPLDCSN</sequence>
<proteinExistence type="evidence at protein level"/>
<name>AFP1_TRANT</name>
<protein>
    <recommendedName>
        <fullName evidence="2">Antifungal peptide 1</fullName>
        <shortName evidence="2">Tn-AFP1</shortName>
    </recommendedName>
</protein>
<feature type="peptide" id="PRO_0000415957" description="Antifungal peptide 1" evidence="1">
    <location>
        <begin position="1"/>
        <end position="11"/>
    </location>
</feature>
<reference evidence="3" key="1">
    <citation type="journal article" date="2011" name="Peptides">
        <title>Identification of an antifungal peptide from Trapa natans fruits with inhibitory effects on Candida tropicalis biofilm formation.</title>
        <authorList>
            <person name="Mandal S.M."/>
            <person name="Migliolo L."/>
            <person name="Franco O.L."/>
            <person name="Ghosh A.K."/>
        </authorList>
    </citation>
    <scope>PROTEIN SEQUENCE</scope>
    <scope>FUNCTION</scope>
    <scope>MASS SPECTROMETRY</scope>
    <source>
        <tissue evidence="1">Fruit flesh</tissue>
    </source>
</reference>
<keyword id="KW-0929">Antimicrobial</keyword>
<keyword id="KW-0903">Direct protein sequencing</keyword>
<keyword id="KW-0295">Fungicide</keyword>
<evidence type="ECO:0000269" key="1">
    <source>
    </source>
</evidence>
<evidence type="ECO:0000303" key="2">
    <source>
    </source>
</evidence>
<evidence type="ECO:0000305" key="3"/>
<comment type="function">
    <text evidence="1">Has antifungal activity against C.tropicalis (MIC=32 ug/ml) including the inhibition of biofilm formation. Has virtually no hemolytic activity against mouse erythrocytes.</text>
</comment>
<comment type="mass spectrometry"/>
<dbReference type="GO" id="GO:0050832">
    <property type="term" value="P:defense response to fungus"/>
    <property type="evidence" value="ECO:0007669"/>
    <property type="project" value="UniProtKB-KW"/>
</dbReference>
<dbReference type="GO" id="GO:0031640">
    <property type="term" value="P:killing of cells of another organism"/>
    <property type="evidence" value="ECO:0007669"/>
    <property type="project" value="UniProtKB-KW"/>
</dbReference>
<accession>B3EWE8</accession>